<dbReference type="EC" id="2.7.4.9" evidence="1"/>
<dbReference type="EMBL" id="CP000027">
    <property type="protein sequence ID" value="AAW39931.1"/>
    <property type="molecule type" value="Genomic_DNA"/>
</dbReference>
<dbReference type="RefSeq" id="WP_010936511.1">
    <property type="nucleotide sequence ID" value="NC_002936.3"/>
</dbReference>
<dbReference type="SMR" id="Q3Z8D9"/>
<dbReference type="FunCoup" id="Q3Z8D9">
    <property type="interactions" value="244"/>
</dbReference>
<dbReference type="STRING" id="243164.DET0778"/>
<dbReference type="GeneID" id="3229893"/>
<dbReference type="KEGG" id="det:DET0778"/>
<dbReference type="PATRIC" id="fig|243164.10.peg.742"/>
<dbReference type="eggNOG" id="COG0125">
    <property type="taxonomic scope" value="Bacteria"/>
</dbReference>
<dbReference type="HOGENOM" id="CLU_049131_0_2_0"/>
<dbReference type="InParanoid" id="Q3Z8D9"/>
<dbReference type="Proteomes" id="UP000008289">
    <property type="component" value="Chromosome"/>
</dbReference>
<dbReference type="GO" id="GO:0005829">
    <property type="term" value="C:cytosol"/>
    <property type="evidence" value="ECO:0007669"/>
    <property type="project" value="TreeGrafter"/>
</dbReference>
<dbReference type="GO" id="GO:0005524">
    <property type="term" value="F:ATP binding"/>
    <property type="evidence" value="ECO:0007669"/>
    <property type="project" value="UniProtKB-UniRule"/>
</dbReference>
<dbReference type="GO" id="GO:0004798">
    <property type="term" value="F:dTMP kinase activity"/>
    <property type="evidence" value="ECO:0007669"/>
    <property type="project" value="UniProtKB-UniRule"/>
</dbReference>
<dbReference type="GO" id="GO:0006233">
    <property type="term" value="P:dTDP biosynthetic process"/>
    <property type="evidence" value="ECO:0007669"/>
    <property type="project" value="InterPro"/>
</dbReference>
<dbReference type="GO" id="GO:0006235">
    <property type="term" value="P:dTTP biosynthetic process"/>
    <property type="evidence" value="ECO:0007669"/>
    <property type="project" value="UniProtKB-UniRule"/>
</dbReference>
<dbReference type="GO" id="GO:0006227">
    <property type="term" value="P:dUDP biosynthetic process"/>
    <property type="evidence" value="ECO:0007669"/>
    <property type="project" value="TreeGrafter"/>
</dbReference>
<dbReference type="CDD" id="cd01672">
    <property type="entry name" value="TMPK"/>
    <property type="match status" value="1"/>
</dbReference>
<dbReference type="FunFam" id="3.40.50.300:FF:000225">
    <property type="entry name" value="Thymidylate kinase"/>
    <property type="match status" value="1"/>
</dbReference>
<dbReference type="Gene3D" id="3.40.50.300">
    <property type="entry name" value="P-loop containing nucleotide triphosphate hydrolases"/>
    <property type="match status" value="1"/>
</dbReference>
<dbReference type="HAMAP" id="MF_00165">
    <property type="entry name" value="Thymidylate_kinase"/>
    <property type="match status" value="1"/>
</dbReference>
<dbReference type="InterPro" id="IPR027417">
    <property type="entry name" value="P-loop_NTPase"/>
</dbReference>
<dbReference type="InterPro" id="IPR039430">
    <property type="entry name" value="Thymidylate_kin-like_dom"/>
</dbReference>
<dbReference type="InterPro" id="IPR018095">
    <property type="entry name" value="Thymidylate_kin_CS"/>
</dbReference>
<dbReference type="InterPro" id="IPR018094">
    <property type="entry name" value="Thymidylate_kinase"/>
</dbReference>
<dbReference type="NCBIfam" id="TIGR00041">
    <property type="entry name" value="DTMP_kinase"/>
    <property type="match status" value="1"/>
</dbReference>
<dbReference type="PANTHER" id="PTHR10344">
    <property type="entry name" value="THYMIDYLATE KINASE"/>
    <property type="match status" value="1"/>
</dbReference>
<dbReference type="PANTHER" id="PTHR10344:SF4">
    <property type="entry name" value="UMP-CMP KINASE 2, MITOCHONDRIAL"/>
    <property type="match status" value="1"/>
</dbReference>
<dbReference type="Pfam" id="PF02223">
    <property type="entry name" value="Thymidylate_kin"/>
    <property type="match status" value="1"/>
</dbReference>
<dbReference type="SUPFAM" id="SSF52540">
    <property type="entry name" value="P-loop containing nucleoside triphosphate hydrolases"/>
    <property type="match status" value="1"/>
</dbReference>
<dbReference type="PROSITE" id="PS01331">
    <property type="entry name" value="THYMIDYLATE_KINASE"/>
    <property type="match status" value="1"/>
</dbReference>
<protein>
    <recommendedName>
        <fullName evidence="1">Thymidylate kinase</fullName>
        <ecNumber evidence="1">2.7.4.9</ecNumber>
    </recommendedName>
    <alternativeName>
        <fullName evidence="1">dTMP kinase</fullName>
    </alternativeName>
</protein>
<accession>Q3Z8D9</accession>
<feature type="chain" id="PRO_1000023182" description="Thymidylate kinase">
    <location>
        <begin position="1"/>
        <end position="207"/>
    </location>
</feature>
<feature type="binding site" evidence="1">
    <location>
        <begin position="9"/>
        <end position="16"/>
    </location>
    <ligand>
        <name>ATP</name>
        <dbReference type="ChEBI" id="CHEBI:30616"/>
    </ligand>
</feature>
<proteinExistence type="inferred from homology"/>
<reference key="1">
    <citation type="journal article" date="2005" name="Science">
        <title>Genome sequence of the PCE-dechlorinating bacterium Dehalococcoides ethenogenes.</title>
        <authorList>
            <person name="Seshadri R."/>
            <person name="Adrian L."/>
            <person name="Fouts D.E."/>
            <person name="Eisen J.A."/>
            <person name="Phillippy A.M."/>
            <person name="Methe B.A."/>
            <person name="Ward N.L."/>
            <person name="Nelson W.C."/>
            <person name="DeBoy R.T."/>
            <person name="Khouri H.M."/>
            <person name="Kolonay J.F."/>
            <person name="Dodson R.J."/>
            <person name="Daugherty S.C."/>
            <person name="Brinkac L.M."/>
            <person name="Sullivan S.A."/>
            <person name="Madupu R."/>
            <person name="Nelson K.E."/>
            <person name="Kang K.H."/>
            <person name="Impraim M."/>
            <person name="Tran K."/>
            <person name="Robinson J.M."/>
            <person name="Forberger H.A."/>
            <person name="Fraser C.M."/>
            <person name="Zinder S.H."/>
            <person name="Heidelberg J.F."/>
        </authorList>
    </citation>
    <scope>NUCLEOTIDE SEQUENCE [LARGE SCALE GENOMIC DNA]</scope>
    <source>
        <strain>ATCC BAA-2266 / KCTC 15142 / 195</strain>
    </source>
</reference>
<sequence>MSLFITFEGGEGCGKSTQSKALYRYLKKLGLGCVLTHEPGGTRSGDKITRLLKWSEEENISPLAELFLFNASRSILIDNVIKPALLDGNIVICDRYTDSTLAYQGYGRGLELDTVKCINSLASGGLVPDLTIWLDMDDKAALLRKGKLPPDRFESENNGFHQRVRDGFGVIAAAEPNRFLKLDASLSQSELTKCIKQRVNALLKLPQ</sequence>
<comment type="function">
    <text evidence="1">Phosphorylation of dTMP to form dTDP in both de novo and salvage pathways of dTTP synthesis.</text>
</comment>
<comment type="catalytic activity">
    <reaction evidence="1">
        <text>dTMP + ATP = dTDP + ADP</text>
        <dbReference type="Rhea" id="RHEA:13517"/>
        <dbReference type="ChEBI" id="CHEBI:30616"/>
        <dbReference type="ChEBI" id="CHEBI:58369"/>
        <dbReference type="ChEBI" id="CHEBI:63528"/>
        <dbReference type="ChEBI" id="CHEBI:456216"/>
        <dbReference type="EC" id="2.7.4.9"/>
    </reaction>
</comment>
<comment type="similarity">
    <text evidence="1">Belongs to the thymidylate kinase family.</text>
</comment>
<name>KTHY_DEHM1</name>
<evidence type="ECO:0000255" key="1">
    <source>
        <dbReference type="HAMAP-Rule" id="MF_00165"/>
    </source>
</evidence>
<keyword id="KW-0067">ATP-binding</keyword>
<keyword id="KW-0418">Kinase</keyword>
<keyword id="KW-0545">Nucleotide biosynthesis</keyword>
<keyword id="KW-0547">Nucleotide-binding</keyword>
<keyword id="KW-0808">Transferase</keyword>
<gene>
    <name evidence="1" type="primary">tmk</name>
    <name type="ordered locus">DET0778</name>
</gene>
<organism>
    <name type="scientific">Dehalococcoides mccartyi (strain ATCC BAA-2266 / KCTC 15142 / 195)</name>
    <name type="common">Dehalococcoides ethenogenes (strain 195)</name>
    <dbReference type="NCBI Taxonomy" id="243164"/>
    <lineage>
        <taxon>Bacteria</taxon>
        <taxon>Bacillati</taxon>
        <taxon>Chloroflexota</taxon>
        <taxon>Dehalococcoidia</taxon>
        <taxon>Dehalococcoidales</taxon>
        <taxon>Dehalococcoidaceae</taxon>
        <taxon>Dehalococcoides</taxon>
    </lineage>
</organism>